<evidence type="ECO:0000255" key="1">
    <source>
        <dbReference type="HAMAP-Rule" id="MF_00033"/>
    </source>
</evidence>
<comment type="function">
    <text evidence="1">Cell wall formation. Catalyzes the transfer of a GlcNAc subunit on undecaprenyl-pyrophosphoryl-MurNAc-pentapeptide (lipid intermediate I) to form undecaprenyl-pyrophosphoryl-MurNAc-(pentapeptide)GlcNAc (lipid intermediate II).</text>
</comment>
<comment type="catalytic activity">
    <reaction evidence="1">
        <text>di-trans,octa-cis-undecaprenyl diphospho-N-acetyl-alpha-D-muramoyl-L-alanyl-D-glutamyl-meso-2,6-diaminopimeloyl-D-alanyl-D-alanine + UDP-N-acetyl-alpha-D-glucosamine = di-trans,octa-cis-undecaprenyl diphospho-[N-acetyl-alpha-D-glucosaminyl-(1-&gt;4)]-N-acetyl-alpha-D-muramoyl-L-alanyl-D-glutamyl-meso-2,6-diaminopimeloyl-D-alanyl-D-alanine + UDP + H(+)</text>
        <dbReference type="Rhea" id="RHEA:31227"/>
        <dbReference type="ChEBI" id="CHEBI:15378"/>
        <dbReference type="ChEBI" id="CHEBI:57705"/>
        <dbReference type="ChEBI" id="CHEBI:58223"/>
        <dbReference type="ChEBI" id="CHEBI:61387"/>
        <dbReference type="ChEBI" id="CHEBI:61388"/>
        <dbReference type="EC" id="2.4.1.227"/>
    </reaction>
</comment>
<comment type="pathway">
    <text evidence="1">Cell wall biogenesis; peptidoglycan biosynthesis.</text>
</comment>
<comment type="subcellular location">
    <subcellularLocation>
        <location evidence="1">Cell inner membrane</location>
        <topology evidence="1">Peripheral membrane protein</topology>
        <orientation evidence="1">Cytoplasmic side</orientation>
    </subcellularLocation>
</comment>
<comment type="similarity">
    <text evidence="1">Belongs to the glycosyltransferase 28 family. MurG subfamily.</text>
</comment>
<accession>Q5F6L8</accession>
<gene>
    <name evidence="1" type="primary">murG</name>
    <name type="ordered locus">NGO_1533</name>
</gene>
<feature type="chain" id="PRO_0000225069" description="UDP-N-acetylglucosamine--N-acetylmuramyl-(pentapeptide) pyrophosphoryl-undecaprenol N-acetylglucosamine transferase">
    <location>
        <begin position="1"/>
        <end position="355"/>
    </location>
</feature>
<feature type="binding site" evidence="1">
    <location>
        <begin position="13"/>
        <end position="15"/>
    </location>
    <ligand>
        <name>UDP-N-acetyl-alpha-D-glucosamine</name>
        <dbReference type="ChEBI" id="CHEBI:57705"/>
    </ligand>
</feature>
<feature type="binding site" evidence="1">
    <location>
        <position position="125"/>
    </location>
    <ligand>
        <name>UDP-N-acetyl-alpha-D-glucosamine</name>
        <dbReference type="ChEBI" id="CHEBI:57705"/>
    </ligand>
</feature>
<feature type="binding site" evidence="1">
    <location>
        <position position="162"/>
    </location>
    <ligand>
        <name>UDP-N-acetyl-alpha-D-glucosamine</name>
        <dbReference type="ChEBI" id="CHEBI:57705"/>
    </ligand>
</feature>
<feature type="binding site" evidence="1">
    <location>
        <position position="190"/>
    </location>
    <ligand>
        <name>UDP-N-acetyl-alpha-D-glucosamine</name>
        <dbReference type="ChEBI" id="CHEBI:57705"/>
    </ligand>
</feature>
<feature type="binding site" evidence="1">
    <location>
        <position position="244"/>
    </location>
    <ligand>
        <name>UDP-N-acetyl-alpha-D-glucosamine</name>
        <dbReference type="ChEBI" id="CHEBI:57705"/>
    </ligand>
</feature>
<feature type="binding site" evidence="1">
    <location>
        <position position="289"/>
    </location>
    <ligand>
        <name>UDP-N-acetyl-alpha-D-glucosamine</name>
        <dbReference type="ChEBI" id="CHEBI:57705"/>
    </ligand>
</feature>
<sequence>MGGKTFMLMAGGTGGHIFPALAVADSLRVRGHHVIWLGSKDSMEERIVPQYGIRLETLAIKGIRGNGIKRKLMLPFTLYKTVREAQRIIRKHRVECVIGFGGFVTFPGGLAAKLLGVPIVIHEQNAVAGLSNRHLSRWAKRVLYAFPKAFSHEGGLVGNPVRADISNLPVPAERFQGREGRLKILVVGGSLGADVLNKTVPQALALLPEEVRPQMYHQSGRNKLGNLQADYDALGVKAECVEFITDMVSAYRDADLVICRAGALTIAELTAAGLGALLVPYPHAVDDHQTANARFMVQAEAGLLLPQTQLTAEKLAEILGSLNREKCLKWAENARTLALPHSADDVAEAAIACAA</sequence>
<reference key="1">
    <citation type="submission" date="2003-03" db="EMBL/GenBank/DDBJ databases">
        <title>The complete genome sequence of Neisseria gonorrhoeae.</title>
        <authorList>
            <person name="Lewis L.A."/>
            <person name="Gillaspy A.F."/>
            <person name="McLaughlin R.E."/>
            <person name="Gipson M."/>
            <person name="Ducey T.F."/>
            <person name="Ownbey T."/>
            <person name="Hartman K."/>
            <person name="Nydick C."/>
            <person name="Carson M.B."/>
            <person name="Vaughn J."/>
            <person name="Thomson C."/>
            <person name="Song L."/>
            <person name="Lin S."/>
            <person name="Yuan X."/>
            <person name="Najar F."/>
            <person name="Zhan M."/>
            <person name="Ren Q."/>
            <person name="Zhu H."/>
            <person name="Qi S."/>
            <person name="Kenton S.M."/>
            <person name="Lai H."/>
            <person name="White J.D."/>
            <person name="Clifton S."/>
            <person name="Roe B.A."/>
            <person name="Dyer D.W."/>
        </authorList>
    </citation>
    <scope>NUCLEOTIDE SEQUENCE [LARGE SCALE GENOMIC DNA]</scope>
    <source>
        <strain>ATCC 700825 / FA 1090</strain>
    </source>
</reference>
<protein>
    <recommendedName>
        <fullName evidence="1">UDP-N-acetylglucosamine--N-acetylmuramyl-(pentapeptide) pyrophosphoryl-undecaprenol N-acetylglucosamine transferase</fullName>
        <ecNumber evidence="1">2.4.1.227</ecNumber>
    </recommendedName>
    <alternativeName>
        <fullName evidence="1">Undecaprenyl-PP-MurNAc-pentapeptide-UDPGlcNAc GlcNAc transferase</fullName>
    </alternativeName>
</protein>
<dbReference type="EC" id="2.4.1.227" evidence="1"/>
<dbReference type="EMBL" id="AE004969">
    <property type="protein sequence ID" value="AAW90169.1"/>
    <property type="molecule type" value="Genomic_DNA"/>
</dbReference>
<dbReference type="RefSeq" id="WP_003689443.1">
    <property type="nucleotide sequence ID" value="NC_002946.2"/>
</dbReference>
<dbReference type="RefSeq" id="YP_208581.1">
    <property type="nucleotide sequence ID" value="NC_002946.2"/>
</dbReference>
<dbReference type="SMR" id="Q5F6L8"/>
<dbReference type="STRING" id="242231.NGO_1533"/>
<dbReference type="CAZy" id="GT28">
    <property type="family name" value="Glycosyltransferase Family 28"/>
</dbReference>
<dbReference type="GeneID" id="66753739"/>
<dbReference type="KEGG" id="ngo:NGO_1533"/>
<dbReference type="PATRIC" id="fig|242231.10.peg.1829"/>
<dbReference type="HOGENOM" id="CLU_037404_2_0_4"/>
<dbReference type="UniPathway" id="UPA00219"/>
<dbReference type="Proteomes" id="UP000000535">
    <property type="component" value="Chromosome"/>
</dbReference>
<dbReference type="GO" id="GO:0005886">
    <property type="term" value="C:plasma membrane"/>
    <property type="evidence" value="ECO:0007669"/>
    <property type="project" value="UniProtKB-SubCell"/>
</dbReference>
<dbReference type="GO" id="GO:0051991">
    <property type="term" value="F:UDP-N-acetyl-D-glucosamine:N-acetylmuramoyl-L-alanyl-D-glutamyl-meso-2,6-diaminopimelyl-D-alanyl-D-alanine-diphosphoundecaprenol 4-beta-N-acetylglucosaminlytransferase activity"/>
    <property type="evidence" value="ECO:0007669"/>
    <property type="project" value="RHEA"/>
</dbReference>
<dbReference type="GO" id="GO:0050511">
    <property type="term" value="F:undecaprenyldiphospho-muramoylpentapeptide beta-N-acetylglucosaminyltransferase activity"/>
    <property type="evidence" value="ECO:0007669"/>
    <property type="project" value="UniProtKB-UniRule"/>
</dbReference>
<dbReference type="GO" id="GO:0005975">
    <property type="term" value="P:carbohydrate metabolic process"/>
    <property type="evidence" value="ECO:0007669"/>
    <property type="project" value="InterPro"/>
</dbReference>
<dbReference type="GO" id="GO:0051301">
    <property type="term" value="P:cell division"/>
    <property type="evidence" value="ECO:0007669"/>
    <property type="project" value="UniProtKB-KW"/>
</dbReference>
<dbReference type="GO" id="GO:0071555">
    <property type="term" value="P:cell wall organization"/>
    <property type="evidence" value="ECO:0007669"/>
    <property type="project" value="UniProtKB-KW"/>
</dbReference>
<dbReference type="GO" id="GO:0030259">
    <property type="term" value="P:lipid glycosylation"/>
    <property type="evidence" value="ECO:0007669"/>
    <property type="project" value="UniProtKB-UniRule"/>
</dbReference>
<dbReference type="GO" id="GO:0009252">
    <property type="term" value="P:peptidoglycan biosynthetic process"/>
    <property type="evidence" value="ECO:0007669"/>
    <property type="project" value="UniProtKB-UniRule"/>
</dbReference>
<dbReference type="GO" id="GO:0008360">
    <property type="term" value="P:regulation of cell shape"/>
    <property type="evidence" value="ECO:0007669"/>
    <property type="project" value="UniProtKB-KW"/>
</dbReference>
<dbReference type="CDD" id="cd03785">
    <property type="entry name" value="GT28_MurG"/>
    <property type="match status" value="1"/>
</dbReference>
<dbReference type="Gene3D" id="3.40.50.2000">
    <property type="entry name" value="Glycogen Phosphorylase B"/>
    <property type="match status" value="2"/>
</dbReference>
<dbReference type="HAMAP" id="MF_00033">
    <property type="entry name" value="MurG"/>
    <property type="match status" value="1"/>
</dbReference>
<dbReference type="InterPro" id="IPR006009">
    <property type="entry name" value="GlcNAc_MurG"/>
</dbReference>
<dbReference type="InterPro" id="IPR007235">
    <property type="entry name" value="Glyco_trans_28_C"/>
</dbReference>
<dbReference type="InterPro" id="IPR004276">
    <property type="entry name" value="GlycoTrans_28_N"/>
</dbReference>
<dbReference type="NCBIfam" id="TIGR01133">
    <property type="entry name" value="murG"/>
    <property type="match status" value="1"/>
</dbReference>
<dbReference type="PANTHER" id="PTHR21015:SF22">
    <property type="entry name" value="GLYCOSYLTRANSFERASE"/>
    <property type="match status" value="1"/>
</dbReference>
<dbReference type="PANTHER" id="PTHR21015">
    <property type="entry name" value="UDP-N-ACETYLGLUCOSAMINE--N-ACETYLMURAMYL-(PENTAPEPTIDE) PYROPHOSPHORYL-UNDECAPRENOL N-ACETYLGLUCOSAMINE TRANSFERASE 1"/>
    <property type="match status" value="1"/>
</dbReference>
<dbReference type="Pfam" id="PF04101">
    <property type="entry name" value="Glyco_tran_28_C"/>
    <property type="match status" value="1"/>
</dbReference>
<dbReference type="Pfam" id="PF03033">
    <property type="entry name" value="Glyco_transf_28"/>
    <property type="match status" value="1"/>
</dbReference>
<dbReference type="SUPFAM" id="SSF53756">
    <property type="entry name" value="UDP-Glycosyltransferase/glycogen phosphorylase"/>
    <property type="match status" value="1"/>
</dbReference>
<proteinExistence type="inferred from homology"/>
<keyword id="KW-0131">Cell cycle</keyword>
<keyword id="KW-0132">Cell division</keyword>
<keyword id="KW-0997">Cell inner membrane</keyword>
<keyword id="KW-1003">Cell membrane</keyword>
<keyword id="KW-0133">Cell shape</keyword>
<keyword id="KW-0961">Cell wall biogenesis/degradation</keyword>
<keyword id="KW-0328">Glycosyltransferase</keyword>
<keyword id="KW-0472">Membrane</keyword>
<keyword id="KW-0573">Peptidoglycan synthesis</keyword>
<keyword id="KW-1185">Reference proteome</keyword>
<keyword id="KW-0808">Transferase</keyword>
<organism>
    <name type="scientific">Neisseria gonorrhoeae (strain ATCC 700825 / FA 1090)</name>
    <dbReference type="NCBI Taxonomy" id="242231"/>
    <lineage>
        <taxon>Bacteria</taxon>
        <taxon>Pseudomonadati</taxon>
        <taxon>Pseudomonadota</taxon>
        <taxon>Betaproteobacteria</taxon>
        <taxon>Neisseriales</taxon>
        <taxon>Neisseriaceae</taxon>
        <taxon>Neisseria</taxon>
    </lineage>
</organism>
<name>MURG_NEIG1</name>